<accession>Q2VBP8</accession>
<dbReference type="EMBL" id="DQ273567">
    <property type="protein sequence ID" value="ABB83621.1"/>
    <property type="molecule type" value="mRNA"/>
</dbReference>
<dbReference type="SMR" id="Q2VBP8"/>
<dbReference type="TopDownProteomics" id="Q2VBP8"/>
<dbReference type="GO" id="GO:0005576">
    <property type="term" value="C:extracellular region"/>
    <property type="evidence" value="ECO:0007669"/>
    <property type="project" value="UniProtKB-SubCell"/>
</dbReference>
<dbReference type="GO" id="GO:0030550">
    <property type="term" value="F:acetylcholine receptor inhibitor activity"/>
    <property type="evidence" value="ECO:0007669"/>
    <property type="project" value="UniProtKB-KW"/>
</dbReference>
<dbReference type="GO" id="GO:0099106">
    <property type="term" value="F:ion channel regulator activity"/>
    <property type="evidence" value="ECO:0007669"/>
    <property type="project" value="UniProtKB-KW"/>
</dbReference>
<dbReference type="GO" id="GO:0090729">
    <property type="term" value="F:toxin activity"/>
    <property type="evidence" value="ECO:0007669"/>
    <property type="project" value="UniProtKB-KW"/>
</dbReference>
<dbReference type="CDD" id="cd00206">
    <property type="entry name" value="TFP_snake_toxin"/>
    <property type="match status" value="1"/>
</dbReference>
<dbReference type="Gene3D" id="2.10.60.10">
    <property type="entry name" value="CD59"/>
    <property type="match status" value="1"/>
</dbReference>
<dbReference type="InterPro" id="IPR003571">
    <property type="entry name" value="Snake_3FTx"/>
</dbReference>
<dbReference type="InterPro" id="IPR045860">
    <property type="entry name" value="Snake_toxin-like_sf"/>
</dbReference>
<dbReference type="InterPro" id="IPR018354">
    <property type="entry name" value="Snake_toxin_con_site"/>
</dbReference>
<dbReference type="InterPro" id="IPR054131">
    <property type="entry name" value="Toxin_cobra-type"/>
</dbReference>
<dbReference type="Pfam" id="PF21947">
    <property type="entry name" value="Toxin_cobra-type"/>
    <property type="match status" value="1"/>
</dbReference>
<dbReference type="SUPFAM" id="SSF57302">
    <property type="entry name" value="Snake toxin-like"/>
    <property type="match status" value="1"/>
</dbReference>
<dbReference type="PROSITE" id="PS00272">
    <property type="entry name" value="SNAKE_TOXIN"/>
    <property type="match status" value="1"/>
</dbReference>
<reference key="1">
    <citation type="journal article" date="2006" name="Biochem. J.">
        <title>Novel genes encoding six kinds of three-finger toxins in Ophiophagus hannah (king cobra) and function characterization of two recombinant long-chain neurotoxins.</title>
        <authorList>
            <person name="Li J."/>
            <person name="Zhang H."/>
            <person name="Liu J."/>
            <person name="Xu K."/>
        </authorList>
    </citation>
    <scope>NUCLEOTIDE SEQUENCE [MRNA]</scope>
    <scope>FUNCTION</scope>
    <scope>TOXIC DOSE</scope>
    <source>
        <tissue>Venom gland</tissue>
    </source>
</reference>
<proteinExistence type="inferred from homology"/>
<comment type="function">
    <text evidence="2 3">Binds with high affinity to muscular (alpha-1/CHRNA1) and neuronal (alpha-7/CHRNA7) nicotinic acetylcholine receptor (nAChR) and inhibits acetylcholine from binding to the receptor, thereby impairing neuromuscular and neuronal transmission (By similarity). Recombinant LNTX1 leads to a functional block of the muscle-type acetylcholine receptors. Has a cytotoxic activity (PubMed:16689684).</text>
</comment>
<comment type="subunit">
    <text evidence="4">Monomer.</text>
</comment>
<comment type="subcellular location">
    <subcellularLocation>
        <location evidence="1">Secreted</location>
    </subcellularLocation>
</comment>
<comment type="tissue specificity">
    <text evidence="4">Expressed by the venom gland.</text>
</comment>
<comment type="toxic dose">
    <text evidence="3">LD(50) is 0.51 mg/kg by intravenous injection into mice.</text>
</comment>
<comment type="similarity">
    <text evidence="4">Belongs to the three-finger toxin family. Long-chain subfamily. Type II alpha-neurotoxin sub-subfamily.</text>
</comment>
<keyword id="KW-0008">Acetylcholine receptor inhibiting toxin</keyword>
<keyword id="KW-1015">Disulfide bond</keyword>
<keyword id="KW-0872">Ion channel impairing toxin</keyword>
<keyword id="KW-0528">Neurotoxin</keyword>
<keyword id="KW-0629">Postsynaptic neurotoxin</keyword>
<keyword id="KW-0964">Secreted</keyword>
<keyword id="KW-0732">Signal</keyword>
<keyword id="KW-0800">Toxin</keyword>
<evidence type="ECO:0000250" key="1"/>
<evidence type="ECO:0000250" key="2">
    <source>
        <dbReference type="UniProtKB" id="P60615"/>
    </source>
</evidence>
<evidence type="ECO:0000269" key="3">
    <source>
    </source>
</evidence>
<evidence type="ECO:0000305" key="4"/>
<sequence length="94" mass="10536">MKILLLTLVVVTIMCLDLGYTTKCYKTGERIISETCPPGQDLCYMKTWCDVFCGSRGRVIELGCTATCPTVKPHEQITCCSTDNCNPHPKMKQR</sequence>
<feature type="signal peptide" evidence="1">
    <location>
        <begin position="1"/>
        <end position="21"/>
    </location>
</feature>
<feature type="chain" id="PRO_5000006477" description="Long neurotoxin LNTX1">
    <location>
        <begin position="22"/>
        <end position="94"/>
    </location>
</feature>
<feature type="disulfide bond" evidence="1">
    <location>
        <begin position="24"/>
        <end position="43"/>
    </location>
</feature>
<feature type="disulfide bond" evidence="1">
    <location>
        <begin position="36"/>
        <end position="64"/>
    </location>
</feature>
<feature type="disulfide bond" evidence="1">
    <location>
        <begin position="49"/>
        <end position="53"/>
    </location>
</feature>
<feature type="disulfide bond" evidence="1">
    <location>
        <begin position="68"/>
        <end position="79"/>
    </location>
</feature>
<feature type="disulfide bond" evidence="1">
    <location>
        <begin position="80"/>
        <end position="85"/>
    </location>
</feature>
<organism>
    <name type="scientific">Ophiophagus hannah</name>
    <name type="common">King cobra</name>
    <name type="synonym">Naja hannah</name>
    <dbReference type="NCBI Taxonomy" id="8665"/>
    <lineage>
        <taxon>Eukaryota</taxon>
        <taxon>Metazoa</taxon>
        <taxon>Chordata</taxon>
        <taxon>Craniata</taxon>
        <taxon>Vertebrata</taxon>
        <taxon>Euteleostomi</taxon>
        <taxon>Lepidosauria</taxon>
        <taxon>Squamata</taxon>
        <taxon>Bifurcata</taxon>
        <taxon>Unidentata</taxon>
        <taxon>Episquamata</taxon>
        <taxon>Toxicofera</taxon>
        <taxon>Serpentes</taxon>
        <taxon>Colubroidea</taxon>
        <taxon>Elapidae</taxon>
        <taxon>Elapinae</taxon>
        <taxon>Ophiophagus</taxon>
    </lineage>
</organism>
<protein>
    <recommendedName>
        <fullName>Long neurotoxin LNTX1</fullName>
    </recommendedName>
</protein>
<name>3L2X1_OPHHA</name>